<comment type="function">
    <text evidence="1">Transfers and isomerizes the ribose moiety from AdoMet to the 7-aminomethyl group of 7-deazaguanine (preQ1-tRNA) to give epoxyqueuosine (oQ-tRNA).</text>
</comment>
<comment type="catalytic activity">
    <reaction evidence="1">
        <text>7-aminomethyl-7-carbaguanosine(34) in tRNA + S-adenosyl-L-methionine = epoxyqueuosine(34) in tRNA + adenine + L-methionine + 2 H(+)</text>
        <dbReference type="Rhea" id="RHEA:32155"/>
        <dbReference type="Rhea" id="RHEA-COMP:10342"/>
        <dbReference type="Rhea" id="RHEA-COMP:18582"/>
        <dbReference type="ChEBI" id="CHEBI:15378"/>
        <dbReference type="ChEBI" id="CHEBI:16708"/>
        <dbReference type="ChEBI" id="CHEBI:57844"/>
        <dbReference type="ChEBI" id="CHEBI:59789"/>
        <dbReference type="ChEBI" id="CHEBI:82833"/>
        <dbReference type="ChEBI" id="CHEBI:194443"/>
        <dbReference type="EC" id="2.4.99.17"/>
    </reaction>
</comment>
<comment type="pathway">
    <text evidence="1">tRNA modification; tRNA-queuosine biosynthesis.</text>
</comment>
<comment type="subunit">
    <text evidence="1">Monomer.</text>
</comment>
<comment type="subcellular location">
    <subcellularLocation>
        <location evidence="1">Cytoplasm</location>
    </subcellularLocation>
</comment>
<comment type="similarity">
    <text evidence="1">Belongs to the QueA family.</text>
</comment>
<accession>A7NB92</accession>
<organism>
    <name type="scientific">Francisella tularensis subsp. holarctica (strain FTNF002-00 / FTA)</name>
    <dbReference type="NCBI Taxonomy" id="458234"/>
    <lineage>
        <taxon>Bacteria</taxon>
        <taxon>Pseudomonadati</taxon>
        <taxon>Pseudomonadota</taxon>
        <taxon>Gammaproteobacteria</taxon>
        <taxon>Thiotrichales</taxon>
        <taxon>Francisellaceae</taxon>
        <taxon>Francisella</taxon>
    </lineage>
</organism>
<proteinExistence type="inferred from homology"/>
<gene>
    <name evidence="1" type="primary">queA</name>
    <name type="ordered locus">FTA_0769</name>
</gene>
<protein>
    <recommendedName>
        <fullName evidence="1">S-adenosylmethionine:tRNA ribosyltransferase-isomerase</fullName>
        <ecNumber evidence="1">2.4.99.17</ecNumber>
    </recommendedName>
    <alternativeName>
        <fullName evidence="1">Queuosine biosynthesis protein QueA</fullName>
    </alternativeName>
</protein>
<evidence type="ECO:0000255" key="1">
    <source>
        <dbReference type="HAMAP-Rule" id="MF_00113"/>
    </source>
</evidence>
<name>QUEA_FRATF</name>
<keyword id="KW-0963">Cytoplasm</keyword>
<keyword id="KW-0671">Queuosine biosynthesis</keyword>
<keyword id="KW-0949">S-adenosyl-L-methionine</keyword>
<keyword id="KW-0808">Transferase</keyword>
<feature type="chain" id="PRO_1000057742" description="S-adenosylmethionine:tRNA ribosyltransferase-isomerase">
    <location>
        <begin position="1"/>
        <end position="338"/>
    </location>
</feature>
<reference key="1">
    <citation type="journal article" date="2009" name="PLoS ONE">
        <title>Complete genome sequence of Francisella tularensis subspecies holarctica FTNF002-00.</title>
        <authorList>
            <person name="Barabote R.D."/>
            <person name="Xie G."/>
            <person name="Brettin T.S."/>
            <person name="Hinrichs S.H."/>
            <person name="Fey P.D."/>
            <person name="Jay J.J."/>
            <person name="Engle J.L."/>
            <person name="Godbole S.D."/>
            <person name="Noronha J.M."/>
            <person name="Scheuermann R.H."/>
            <person name="Zhou L.W."/>
            <person name="Lion C."/>
            <person name="Dempsey M.P."/>
        </authorList>
    </citation>
    <scope>NUCLEOTIDE SEQUENCE [LARGE SCALE GENOMIC DNA]</scope>
    <source>
        <strain>FTNF002-00 / FTA</strain>
    </source>
</reference>
<sequence length="338" mass="38358">MKTDDFDYKLPEELIASYPLENRDASRLLKLNKQTGEIADYKFTDFIDFINPGDLLVFNNSKVMLARLYGSKTTGAKLEYLIERIKNPKLFETHIKANRSPAIGSEIYVEDTLAKVLDKDGGMYLLEIQGDKDIYQLMEEFGHIPLPPYMKRDDEEFDAERYQTVYAQDLGSVAALTAGLHFSKELMQQIKDKGVDIAYITLHVGSGTFKPVQVDDVESHKMHAEVISVPVEVCQKIRQTKENGGRVITIGTTSVRSLETAGQNGQIEPYQGETDIFLYPGKKFNVVDAMITNFHLPKSTLIMLVSAFADKEKIIKAYEHAIAERYRFFSYGDAMFIF</sequence>
<dbReference type="EC" id="2.4.99.17" evidence="1"/>
<dbReference type="EMBL" id="CP000803">
    <property type="protein sequence ID" value="ABU61245.1"/>
    <property type="molecule type" value="Genomic_DNA"/>
</dbReference>
<dbReference type="RefSeq" id="WP_010030758.1">
    <property type="nucleotide sequence ID" value="NC_009749.1"/>
</dbReference>
<dbReference type="SMR" id="A7NB92"/>
<dbReference type="KEGG" id="fta:FTA_0769"/>
<dbReference type="HOGENOM" id="CLU_039110_1_0_6"/>
<dbReference type="UniPathway" id="UPA00392"/>
<dbReference type="GO" id="GO:0005737">
    <property type="term" value="C:cytoplasm"/>
    <property type="evidence" value="ECO:0007669"/>
    <property type="project" value="UniProtKB-SubCell"/>
</dbReference>
<dbReference type="GO" id="GO:0051075">
    <property type="term" value="F:S-adenosylmethionine:tRNA ribosyltransferase-isomerase activity"/>
    <property type="evidence" value="ECO:0007669"/>
    <property type="project" value="UniProtKB-EC"/>
</dbReference>
<dbReference type="GO" id="GO:0008616">
    <property type="term" value="P:queuosine biosynthetic process"/>
    <property type="evidence" value="ECO:0007669"/>
    <property type="project" value="UniProtKB-UniRule"/>
</dbReference>
<dbReference type="GO" id="GO:0002099">
    <property type="term" value="P:tRNA wobble guanine modification"/>
    <property type="evidence" value="ECO:0007669"/>
    <property type="project" value="TreeGrafter"/>
</dbReference>
<dbReference type="FunFam" id="3.40.1780.10:FF:000001">
    <property type="entry name" value="S-adenosylmethionine:tRNA ribosyltransferase-isomerase"/>
    <property type="match status" value="1"/>
</dbReference>
<dbReference type="Gene3D" id="2.40.10.240">
    <property type="entry name" value="QueA-like"/>
    <property type="match status" value="1"/>
</dbReference>
<dbReference type="Gene3D" id="3.40.1780.10">
    <property type="entry name" value="QueA-like"/>
    <property type="match status" value="1"/>
</dbReference>
<dbReference type="HAMAP" id="MF_00113">
    <property type="entry name" value="QueA"/>
    <property type="match status" value="1"/>
</dbReference>
<dbReference type="InterPro" id="IPR003699">
    <property type="entry name" value="QueA"/>
</dbReference>
<dbReference type="InterPro" id="IPR042118">
    <property type="entry name" value="QueA_dom1"/>
</dbReference>
<dbReference type="InterPro" id="IPR042119">
    <property type="entry name" value="QueA_dom2"/>
</dbReference>
<dbReference type="InterPro" id="IPR036100">
    <property type="entry name" value="QueA_sf"/>
</dbReference>
<dbReference type="NCBIfam" id="NF001140">
    <property type="entry name" value="PRK00147.1"/>
    <property type="match status" value="1"/>
</dbReference>
<dbReference type="NCBIfam" id="TIGR00113">
    <property type="entry name" value="queA"/>
    <property type="match status" value="1"/>
</dbReference>
<dbReference type="PANTHER" id="PTHR30307">
    <property type="entry name" value="S-ADENOSYLMETHIONINE:TRNA RIBOSYLTRANSFERASE-ISOMERASE"/>
    <property type="match status" value="1"/>
</dbReference>
<dbReference type="PANTHER" id="PTHR30307:SF0">
    <property type="entry name" value="S-ADENOSYLMETHIONINE:TRNA RIBOSYLTRANSFERASE-ISOMERASE"/>
    <property type="match status" value="1"/>
</dbReference>
<dbReference type="Pfam" id="PF02547">
    <property type="entry name" value="Queuosine_synth"/>
    <property type="match status" value="1"/>
</dbReference>
<dbReference type="SUPFAM" id="SSF111337">
    <property type="entry name" value="QueA-like"/>
    <property type="match status" value="1"/>
</dbReference>